<accession>Q13342</accession>
<accession>E7ESH9</accession>
<accession>E7EUR5</accession>
<accession>E9PFJ6</accession>
<accession>Q0VGE5</accession>
<accession>Q13341</accession>
<accession>Q3KR17</accession>
<accession>Q4ZG66</accession>
<accession>Q53TG1</accession>
<accession>Q6NSG4</accession>
<accession>Q92881</accession>
<accession>Q96TG3</accession>
<comment type="function">
    <text evidence="8 11 14">Component of the nuclear body, also known as nuclear domain 10, PML oncogenic domain, and KR body (PubMed:8910577). May be involved in the pathogenesis of acute promyelocytic leukemia and viral infection (PubMed:8910577). May play a role in chromatin-mediated regulation of gene expression although it does not bind to histone H3 tails (PubMed:24267382).</text>
</comment>
<comment type="subunit">
    <text evidence="8">Interacts with PIN1.</text>
</comment>
<comment type="interaction">
    <interactant intactId="EBI-2865100">
        <id>Q13342</id>
    </interactant>
    <interactant intactId="EBI-2007911">
        <id>Q16236</id>
        <label>NFE2L2</label>
    </interactant>
    <organismsDiffer>false</organismsDiffer>
    <experiments>4</experiments>
</comment>
<comment type="interaction">
    <interactant intactId="EBI-2865100">
        <id>Q13342</id>
    </interactant>
    <interactant intactId="EBI-714158">
        <id>Q13526</id>
        <label>PIN1</label>
    </interactant>
    <organismsDiffer>false</organismsDiffer>
    <experiments>4</experiments>
</comment>
<comment type="subcellular location">
    <subcellularLocation>
        <location evidence="9 10 11">Nucleus</location>
    </subcellularLocation>
    <subcellularLocation>
        <location evidence="10 11">Nucleus</location>
        <location evidence="10 11">PML body</location>
    </subcellularLocation>
    <subcellularLocation>
        <location evidence="10">Cytoplasm</location>
    </subcellularLocation>
    <text evidence="10 11">Localized to nuclear structures termed LANDS, for LYSp100-associated nuclear domains. LANDS are globular, electron-dense structures most often found in the nucleoplasm, but also found at the nuclear membrane and in the cytoplasm, suggesting that these structures may traffic between the cytoplasm and the nucleus (PubMed:8695863). Also colocalizes with PML in a subset of PML nuclear bodies (PubMed:8910577).</text>
</comment>
<comment type="alternative products">
    <event type="alternative splicing"/>
    <isoform>
        <id>Q13342-1</id>
        <name evidence="13">LYSp100-B</name>
        <sequence type="displayed"/>
    </isoform>
    <isoform>
        <id>Q13342-2</id>
        <name evidence="13">LYSp100-A</name>
        <sequence type="described" ref="VSP_000560 VSP_000561 VSP_000562"/>
    </isoform>
    <isoform>
        <id>Q13342-3</id>
        <name evidence="13">Sp140</name>
        <sequence type="described" ref="VSP_055922 VSP_000558 VSP_000559"/>
    </isoform>
    <isoform>
        <id>Q13342-4</id>
        <name>4</name>
        <sequence type="described" ref="VSP_043235 VSP_043236"/>
    </isoform>
    <isoform>
        <id>Q13342-5</id>
        <name>5</name>
        <sequence type="described" ref="VSP_055924"/>
    </isoform>
    <isoform>
        <id>Q13342-6</id>
        <name>6</name>
        <sequence type="described" ref="VSP_055923 VSP_000560"/>
    </isoform>
</comment>
<comment type="tissue specificity">
    <text evidence="10 11">High levels in spleen and peripheral blood leukocytes, much lower levels in tonsils, thymus, prostate, ovary, small intestine, and colon (PubMed:8695863, PubMed:8910577). Very low levels in heart, brain, placenta, lung, liver, skeletal muscle, kidney, and pancreas (PubMed:8910577). Not detected in brain, liver and muscle (PubMed:8695863).</text>
</comment>
<comment type="induction">
    <text evidence="11">By gamma-interferon.</text>
</comment>
<comment type="PTM">
    <text evidence="8">Phosphorylation at Thr-726 promotes binding of PIN1 and subsequent isomerization of Pro-727.</text>
</comment>
<comment type="miscellaneous">
    <text evidence="11">This antigen is recognized by autoantibodies from patients with primary biliary cirrhosis.</text>
</comment>
<comment type="sequence caution" evidence="15">
    <conflict type="frameshift">
        <sequence resource="EMBL-CDS" id="AAB18617"/>
    </conflict>
</comment>
<comment type="sequence caution" evidence="15">
    <conflict type="erroneous gene model prediction">
        <sequence resource="EMBL-CDS" id="AAX93282"/>
    </conflict>
</comment>
<reference key="1">
    <citation type="journal article" date="1996" name="Blood">
        <title>LYSP100-associated nuclear domains (LANDs): description of a new class of subnuclear structures and their relationship to PML nuclear bodies.</title>
        <authorList>
            <person name="Dent A.L."/>
            <person name="Yewdell J."/>
            <person name="Puvion-Dutilleul F."/>
            <person name="Koken M.H.M."/>
            <person name="de The H."/>
            <person name="Staudt L.M."/>
        </authorList>
    </citation>
    <scope>NUCLEOTIDE SEQUENCE [MRNA] (ISOFORMS LYSP100-A AND LYSP100-B)</scope>
    <scope>SUBCELLULAR LOCATION</scope>
    <scope>TISSUE SPECIFICITY</scope>
</reference>
<reference key="2">
    <citation type="journal article" date="1996" name="J. Biol. Chem.">
        <title>Identification and characterization of a leukocyte-specific component of the nuclear body.</title>
        <authorList>
            <person name="Bloch D.B."/>
            <person name="de la Monte S.M."/>
            <person name="Guigaouri P."/>
            <person name="Filippov A."/>
            <person name="Bloch K.D."/>
        </authorList>
    </citation>
    <scope>NUCLEOTIDE SEQUENCE [MRNA] (ISOFORM SP140)</scope>
    <scope>VARIANT LYS-516</scope>
    <scope>FUNCTION</scope>
    <scope>SUBCELLULAR LOCATION</scope>
    <scope>TISSUE SPECIFICITY</scope>
    <scope>INDUCTION BY INTERFERON</scope>
    <source>
        <tissue>Placenta</tissue>
    </source>
</reference>
<reference key="3">
    <citation type="journal article" date="2005" name="Nature">
        <title>Generation and annotation of the DNA sequences of human chromosomes 2 and 4.</title>
        <authorList>
            <person name="Hillier L.W."/>
            <person name="Graves T.A."/>
            <person name="Fulton R.S."/>
            <person name="Fulton L.A."/>
            <person name="Pepin K.H."/>
            <person name="Minx P."/>
            <person name="Wagner-McPherson C."/>
            <person name="Layman D."/>
            <person name="Wylie K."/>
            <person name="Sekhon M."/>
            <person name="Becker M.C."/>
            <person name="Fewell G.A."/>
            <person name="Delehaunty K.D."/>
            <person name="Miner T.L."/>
            <person name="Nash W.E."/>
            <person name="Kremitzki C."/>
            <person name="Oddy L."/>
            <person name="Du H."/>
            <person name="Sun H."/>
            <person name="Bradshaw-Cordum H."/>
            <person name="Ali J."/>
            <person name="Carter J."/>
            <person name="Cordes M."/>
            <person name="Harris A."/>
            <person name="Isak A."/>
            <person name="van Brunt A."/>
            <person name="Nguyen C."/>
            <person name="Du F."/>
            <person name="Courtney L."/>
            <person name="Kalicki J."/>
            <person name="Ozersky P."/>
            <person name="Abbott S."/>
            <person name="Armstrong J."/>
            <person name="Belter E.A."/>
            <person name="Caruso L."/>
            <person name="Cedroni M."/>
            <person name="Cotton M."/>
            <person name="Davidson T."/>
            <person name="Desai A."/>
            <person name="Elliott G."/>
            <person name="Erb T."/>
            <person name="Fronick C."/>
            <person name="Gaige T."/>
            <person name="Haakenson W."/>
            <person name="Haglund K."/>
            <person name="Holmes A."/>
            <person name="Harkins R."/>
            <person name="Kim K."/>
            <person name="Kruchowski S.S."/>
            <person name="Strong C.M."/>
            <person name="Grewal N."/>
            <person name="Goyea E."/>
            <person name="Hou S."/>
            <person name="Levy A."/>
            <person name="Martinka S."/>
            <person name="Mead K."/>
            <person name="McLellan M.D."/>
            <person name="Meyer R."/>
            <person name="Randall-Maher J."/>
            <person name="Tomlinson C."/>
            <person name="Dauphin-Kohlberg S."/>
            <person name="Kozlowicz-Reilly A."/>
            <person name="Shah N."/>
            <person name="Swearengen-Shahid S."/>
            <person name="Snider J."/>
            <person name="Strong J.T."/>
            <person name="Thompson J."/>
            <person name="Yoakum M."/>
            <person name="Leonard S."/>
            <person name="Pearman C."/>
            <person name="Trani L."/>
            <person name="Radionenko M."/>
            <person name="Waligorski J.E."/>
            <person name="Wang C."/>
            <person name="Rock S.M."/>
            <person name="Tin-Wollam A.-M."/>
            <person name="Maupin R."/>
            <person name="Latreille P."/>
            <person name="Wendl M.C."/>
            <person name="Yang S.-P."/>
            <person name="Pohl C."/>
            <person name="Wallis J.W."/>
            <person name="Spieth J."/>
            <person name="Bieri T.A."/>
            <person name="Berkowicz N."/>
            <person name="Nelson J.O."/>
            <person name="Osborne J."/>
            <person name="Ding L."/>
            <person name="Meyer R."/>
            <person name="Sabo A."/>
            <person name="Shotland Y."/>
            <person name="Sinha P."/>
            <person name="Wohldmann P.E."/>
            <person name="Cook L.L."/>
            <person name="Hickenbotham M.T."/>
            <person name="Eldred J."/>
            <person name="Williams D."/>
            <person name="Jones T.A."/>
            <person name="She X."/>
            <person name="Ciccarelli F.D."/>
            <person name="Izaurralde E."/>
            <person name="Taylor J."/>
            <person name="Schmutz J."/>
            <person name="Myers R.M."/>
            <person name="Cox D.R."/>
            <person name="Huang X."/>
            <person name="McPherson J.D."/>
            <person name="Mardis E.R."/>
            <person name="Clifton S.W."/>
            <person name="Warren W.C."/>
            <person name="Chinwalla A.T."/>
            <person name="Eddy S.R."/>
            <person name="Marra M.A."/>
            <person name="Ovcharenko I."/>
            <person name="Furey T.S."/>
            <person name="Miller W."/>
            <person name="Eichler E.E."/>
            <person name="Bork P."/>
            <person name="Suyama M."/>
            <person name="Torrents D."/>
            <person name="Waterston R.H."/>
            <person name="Wilson R.K."/>
        </authorList>
    </citation>
    <scope>NUCLEOTIDE SEQUENCE [LARGE SCALE GENOMIC DNA]</scope>
</reference>
<reference key="4">
    <citation type="submission" date="2005-07" db="EMBL/GenBank/DDBJ databases">
        <authorList>
            <person name="Mural R.J."/>
            <person name="Istrail S."/>
            <person name="Sutton G.G."/>
            <person name="Florea L."/>
            <person name="Halpern A.L."/>
            <person name="Mobarry C.M."/>
            <person name="Lippert R."/>
            <person name="Walenz B."/>
            <person name="Shatkay H."/>
            <person name="Dew I."/>
            <person name="Miller J.R."/>
            <person name="Flanigan M.J."/>
            <person name="Edwards N.J."/>
            <person name="Bolanos R."/>
            <person name="Fasulo D."/>
            <person name="Halldorsson B.V."/>
            <person name="Hannenhalli S."/>
            <person name="Turner R."/>
            <person name="Yooseph S."/>
            <person name="Lu F."/>
            <person name="Nusskern D.R."/>
            <person name="Shue B.C."/>
            <person name="Zheng X.H."/>
            <person name="Zhong F."/>
            <person name="Delcher A.L."/>
            <person name="Huson D.H."/>
            <person name="Kravitz S.A."/>
            <person name="Mouchard L."/>
            <person name="Reinert K."/>
            <person name="Remington K.A."/>
            <person name="Clark A.G."/>
            <person name="Waterman M.S."/>
            <person name="Eichler E.E."/>
            <person name="Adams M.D."/>
            <person name="Hunkapiller M.W."/>
            <person name="Myers E.W."/>
            <person name="Venter J.C."/>
        </authorList>
    </citation>
    <scope>NUCLEOTIDE SEQUENCE [LARGE SCALE GENOMIC DNA]</scope>
</reference>
<reference key="5">
    <citation type="journal article" date="2004" name="Genome Res.">
        <title>The status, quality, and expansion of the NIH full-length cDNA project: the Mammalian Gene Collection (MGC).</title>
        <authorList>
            <consortium name="The MGC Project Team"/>
        </authorList>
    </citation>
    <scope>NUCLEOTIDE SEQUENCE [LARGE SCALE MRNA] (ISOFORMS 4; 5 AND 6)</scope>
    <scope>VARIANT LYS-516</scope>
</reference>
<reference key="6">
    <citation type="journal article" date="2014" name="FEBS J.">
        <title>Structure of human Sp140 PHD finger: an atypical fold interacting with Pin1.</title>
        <authorList>
            <person name="Zucchelli C."/>
            <person name="Tamburri S."/>
            <person name="Quilici G."/>
            <person name="Palagano E."/>
            <person name="Berardi A."/>
            <person name="Saare M."/>
            <person name="Peterson P."/>
            <person name="Bachi A."/>
            <person name="Musco G."/>
        </authorList>
    </citation>
    <scope>STRUCTURE BY NMR OF 687-738</scope>
    <scope>FUNCTION</scope>
    <scope>PHOSPHORYLATION AT THR-726</scope>
    <scope>INTERACTION WITH PIN1</scope>
</reference>
<reference key="7">
    <citation type="journal article" date="2015" name="Genes Dev.">
        <title>Screen identifies bromodomain protein ZMYND8 in chromatin recognition of transcription-associated DNA damage that promotes homologous recombination.</title>
        <authorList>
            <person name="Gong F."/>
            <person name="Chiu L.Y."/>
            <person name="Cox B."/>
            <person name="Aymard F."/>
            <person name="Clouaire T."/>
            <person name="Leung J.W."/>
            <person name="Cammarata M."/>
            <person name="Perez M."/>
            <person name="Agarwal P."/>
            <person name="Brodbelt J.S."/>
            <person name="Legube G."/>
            <person name="Miller K.M."/>
        </authorList>
    </citation>
    <scope>SUBCELLULAR LOCATION</scope>
</reference>
<proteinExistence type="evidence at protein level"/>
<evidence type="ECO:0000255" key="1"/>
<evidence type="ECO:0000255" key="2">
    <source>
        <dbReference type="PROSITE-ProRule" id="PRU00035"/>
    </source>
</evidence>
<evidence type="ECO:0000255" key="3">
    <source>
        <dbReference type="PROSITE-ProRule" id="PRU00146"/>
    </source>
</evidence>
<evidence type="ECO:0000255" key="4">
    <source>
        <dbReference type="PROSITE-ProRule" id="PRU00185"/>
    </source>
</evidence>
<evidence type="ECO:0000255" key="5">
    <source>
        <dbReference type="PROSITE-ProRule" id="PRU00747"/>
    </source>
</evidence>
<evidence type="ECO:0000256" key="6">
    <source>
        <dbReference type="SAM" id="MobiDB-lite"/>
    </source>
</evidence>
<evidence type="ECO:0000269" key="7">
    <source>
    </source>
</evidence>
<evidence type="ECO:0000269" key="8">
    <source>
    </source>
</evidence>
<evidence type="ECO:0000269" key="9">
    <source>
    </source>
</evidence>
<evidence type="ECO:0000269" key="10">
    <source>
    </source>
</evidence>
<evidence type="ECO:0000269" key="11">
    <source>
    </source>
</evidence>
<evidence type="ECO:0000303" key="12">
    <source>
    </source>
</evidence>
<evidence type="ECO:0000303" key="13">
    <source>
    </source>
</evidence>
<evidence type="ECO:0000303" key="14">
    <source>
    </source>
</evidence>
<evidence type="ECO:0000305" key="15"/>
<evidence type="ECO:0000312" key="16">
    <source>
        <dbReference type="HGNC" id="HGNC:17133"/>
    </source>
</evidence>
<evidence type="ECO:0007829" key="17">
    <source>
        <dbReference type="PDB" id="2MD7"/>
    </source>
</evidence>
<evidence type="ECO:0007829" key="18">
    <source>
        <dbReference type="PDB" id="6G8R"/>
    </source>
</evidence>
<evidence type="ECO:0007829" key="19">
    <source>
        <dbReference type="PDB" id="8J71"/>
    </source>
</evidence>
<sequence>MAQQGQQGQMASGDSNLNFRMVAEIQNVEGQNLQEQVCPEPIFRFFRENKVEIASAITRPFPFLMGLRDRSFISEQMYEHFQEAFRNLVPVTRVMYCVLSELEKTFGWSHLEALFSRINLMAYPDLNEIYRSFQNVCYEHSPLQMNNVNDLEDRPRLLPYGKQENSNACHEMDDIAVPQEALSSSPRCEPGFSSESCEQLALPKAGGGDAEDAPSLLPGGGVSCKLAIQIDEGESEEMPKLLPYDTEVLESNGMIDAARTYSTAPGEKQGEEEGRNSPRKRNQDKEKYQESPEGRDKETFDLKTPQVTNEGEPEKGLCLLPGEGEEGSDDCSEMCDGEEPQEASSSLARCGSVSCLSAETFDLKTPQVTNEGEPEKELSLLPGEGEEGSDDCSEMCDGEERQEASSSLARRGSVSSELENHPMNEEGESEELASSLLYDNVPGAEQSAYENEKCSCVMCFSEEVPGSPEARTESDQACGTMDTVDIANNSTLGKPKRKRRKKRGHGWSRMRMRRQENSQQNDNSKADGQVVSSEKKANVNLKDLSKIRGRKRGKPGTRFTQSDRAAQKRVRSRASRKHKDETVDFKAPLLPVTCGGVKGILHKKKLQQGILVKCIQTEDGKWFTPTEFEIKGGHARSKNWRLSVRCGGWPLRWLMENGFLPDPPRIRYRKKKRILKSQNNSSVDPCMRNLDECEVCRDGGELFCCDTCSRVFHEDCHIPPVEAERTPWNCIFCRMKESPGSQQCCQESEVLERQMCPEEQLKCEFLLLKVYCCSESSFFAKIPYYYYIREACQGLKEPMWLDKIKKRLNEHGYPQVEGFVQDMRLIFQNHRASYKYKDFGQMGFRLEAEFEKNFKEVFAIQETNGNN</sequence>
<keyword id="KW-0002">3D-structure</keyword>
<keyword id="KW-0025">Alternative splicing</keyword>
<keyword id="KW-0103">Bromodomain</keyword>
<keyword id="KW-0963">Cytoplasm</keyword>
<keyword id="KW-0238">DNA-binding</keyword>
<keyword id="KW-0479">Metal-binding</keyword>
<keyword id="KW-0539">Nucleus</keyword>
<keyword id="KW-0597">Phosphoprotein</keyword>
<keyword id="KW-1267">Proteomics identification</keyword>
<keyword id="KW-1185">Reference proteome</keyword>
<keyword id="KW-0862">Zinc</keyword>
<keyword id="KW-0863">Zinc-finger</keyword>
<gene>
    <name evidence="16" type="primary">SP140</name>
    <name evidence="13" type="synonym">LYSP100</name>
</gene>
<organism>
    <name type="scientific">Homo sapiens</name>
    <name type="common">Human</name>
    <dbReference type="NCBI Taxonomy" id="9606"/>
    <lineage>
        <taxon>Eukaryota</taxon>
        <taxon>Metazoa</taxon>
        <taxon>Chordata</taxon>
        <taxon>Craniata</taxon>
        <taxon>Vertebrata</taxon>
        <taxon>Euteleostomi</taxon>
        <taxon>Mammalia</taxon>
        <taxon>Eutheria</taxon>
        <taxon>Euarchontoglires</taxon>
        <taxon>Primates</taxon>
        <taxon>Haplorrhini</taxon>
        <taxon>Catarrhini</taxon>
        <taxon>Hominidae</taxon>
        <taxon>Homo</taxon>
    </lineage>
</organism>
<name>SP140_HUMAN</name>
<protein>
    <recommendedName>
        <fullName evidence="16">Nuclear body protein SP140</fullName>
    </recommendedName>
    <alternativeName>
        <fullName evidence="13">Lymphoid-restricted homolog of Sp100</fullName>
        <shortName evidence="13">LYSp100</shortName>
    </alternativeName>
    <alternativeName>
        <fullName evidence="14">Nuclear autoantigen Sp-140</fullName>
    </alternativeName>
    <alternativeName>
        <fullName evidence="14">Speckled 140 kDa</fullName>
    </alternativeName>
</protein>
<dbReference type="EMBL" id="U36499">
    <property type="protein sequence ID" value="AAB18616.1"/>
    <property type="molecule type" value="mRNA"/>
</dbReference>
<dbReference type="EMBL" id="U36500">
    <property type="protein sequence ID" value="AAB18617.1"/>
    <property type="status" value="ALT_FRAME"/>
    <property type="molecule type" value="mRNA"/>
</dbReference>
<dbReference type="EMBL" id="U63420">
    <property type="protein sequence ID" value="AAC50817.1"/>
    <property type="molecule type" value="mRNA"/>
</dbReference>
<dbReference type="EMBL" id="AC009949">
    <property type="protein sequence ID" value="AAX88868.1"/>
    <property type="molecule type" value="Genomic_DNA"/>
</dbReference>
<dbReference type="EMBL" id="AC009950">
    <property type="protein sequence ID" value="AAX93282.1"/>
    <property type="status" value="ALT_SEQ"/>
    <property type="molecule type" value="Genomic_DNA"/>
</dbReference>
<dbReference type="EMBL" id="CH471063">
    <property type="protein sequence ID" value="EAW70922.1"/>
    <property type="molecule type" value="Genomic_DNA"/>
</dbReference>
<dbReference type="EMBL" id="BC105743">
    <property type="protein sequence ID" value="AAI05744.1"/>
    <property type="molecule type" value="mRNA"/>
</dbReference>
<dbReference type="EMBL" id="BC105960">
    <property type="protein sequence ID" value="AAI05961.1"/>
    <property type="molecule type" value="mRNA"/>
</dbReference>
<dbReference type="EMBL" id="BC070160">
    <property type="protein sequence ID" value="AAH70160.1"/>
    <property type="molecule type" value="mRNA"/>
</dbReference>
<dbReference type="CCDS" id="CCDS33392.1">
    <molecule id="Q13342-4"/>
</dbReference>
<dbReference type="CCDS" id="CCDS42831.1">
    <molecule id="Q13342-1"/>
</dbReference>
<dbReference type="CCDS" id="CCDS63149.1">
    <molecule id="Q13342-3"/>
</dbReference>
<dbReference type="CCDS" id="CCDS63150.1">
    <molecule id="Q13342-5"/>
</dbReference>
<dbReference type="CCDS" id="CCDS63151.1">
    <molecule id="Q13342-6"/>
</dbReference>
<dbReference type="PIR" id="G02099">
    <property type="entry name" value="G02099"/>
</dbReference>
<dbReference type="RefSeq" id="NP_001005176.1">
    <molecule id="Q13342-4"/>
    <property type="nucleotide sequence ID" value="NM_001005176.3"/>
</dbReference>
<dbReference type="RefSeq" id="NP_001265380.1">
    <molecule id="Q13342-5"/>
    <property type="nucleotide sequence ID" value="NM_001278451.2"/>
</dbReference>
<dbReference type="RefSeq" id="NP_001265381.1">
    <molecule id="Q13342-6"/>
    <property type="nucleotide sequence ID" value="NM_001278452.2"/>
</dbReference>
<dbReference type="RefSeq" id="NP_001265382.1">
    <molecule id="Q13342-3"/>
    <property type="nucleotide sequence ID" value="NM_001278453.2"/>
</dbReference>
<dbReference type="RefSeq" id="NP_009168.4">
    <molecule id="Q13342-1"/>
    <property type="nucleotide sequence ID" value="NM_007237.4"/>
</dbReference>
<dbReference type="PDB" id="2MD7">
    <property type="method" value="NMR"/>
    <property type="chains" value="B=687-738"/>
</dbReference>
<dbReference type="PDB" id="2MD8">
    <property type="method" value="NMR"/>
    <property type="chains" value="C=687-738"/>
</dbReference>
<dbReference type="PDB" id="6G8R">
    <property type="method" value="X-ray"/>
    <property type="resolution" value="2.74 A"/>
    <property type="chains" value="B=687-862"/>
</dbReference>
<dbReference type="PDB" id="8J70">
    <property type="method" value="X-ray"/>
    <property type="resolution" value="1.85 A"/>
    <property type="chains" value="A/B=580-673"/>
</dbReference>
<dbReference type="PDB" id="8J71">
    <property type="method" value="X-ray"/>
    <property type="resolution" value="1.85 A"/>
    <property type="chains" value="A/B=580-673"/>
</dbReference>
<dbReference type="PDBsum" id="2MD7"/>
<dbReference type="PDBsum" id="2MD8"/>
<dbReference type="PDBsum" id="6G8R"/>
<dbReference type="PDBsum" id="8J70"/>
<dbReference type="PDBsum" id="8J71"/>
<dbReference type="BMRB" id="Q13342"/>
<dbReference type="SMR" id="Q13342"/>
<dbReference type="BioGRID" id="116422">
    <property type="interactions" value="8"/>
</dbReference>
<dbReference type="FunCoup" id="Q13342">
    <property type="interactions" value="663"/>
</dbReference>
<dbReference type="IntAct" id="Q13342">
    <property type="interactions" value="8"/>
</dbReference>
<dbReference type="MINT" id="Q13342"/>
<dbReference type="STRING" id="9606.ENSP00000375899"/>
<dbReference type="ChEMBL" id="CHEMBL3108643"/>
<dbReference type="iPTMnet" id="Q13342"/>
<dbReference type="PhosphoSitePlus" id="Q13342"/>
<dbReference type="BioMuta" id="SP140"/>
<dbReference type="DMDM" id="218511671"/>
<dbReference type="jPOST" id="Q13342"/>
<dbReference type="MassIVE" id="Q13342"/>
<dbReference type="PaxDb" id="9606-ENSP00000375899"/>
<dbReference type="PeptideAtlas" id="Q13342"/>
<dbReference type="ProteomicsDB" id="17997"/>
<dbReference type="ProteomicsDB" id="18479"/>
<dbReference type="ProteomicsDB" id="20120"/>
<dbReference type="ProteomicsDB" id="59329">
    <molecule id="Q13342-1"/>
</dbReference>
<dbReference type="ProteomicsDB" id="59330">
    <molecule id="Q13342-2"/>
</dbReference>
<dbReference type="ProteomicsDB" id="59331">
    <molecule id="Q13342-3"/>
</dbReference>
<dbReference type="ProteomicsDB" id="59332">
    <molecule id="Q13342-4"/>
</dbReference>
<dbReference type="ABCD" id="Q13342">
    <property type="antibodies" value="1 sequenced antibody"/>
</dbReference>
<dbReference type="Antibodypedia" id="1754">
    <property type="antibodies" value="161 antibodies from 26 providers"/>
</dbReference>
<dbReference type="DNASU" id="11262"/>
<dbReference type="Ensembl" id="ENST00000343805.10">
    <molecule id="Q13342-6"/>
    <property type="protein sequence ID" value="ENSP00000342096.6"/>
    <property type="gene ID" value="ENSG00000079263.19"/>
</dbReference>
<dbReference type="Ensembl" id="ENST00000373645.3">
    <molecule id="Q13342-4"/>
    <property type="protein sequence ID" value="ENSP00000362749.3"/>
    <property type="gene ID" value="ENSG00000079263.19"/>
</dbReference>
<dbReference type="Ensembl" id="ENST00000392045.8">
    <molecule id="Q13342-1"/>
    <property type="protein sequence ID" value="ENSP00000375899.3"/>
    <property type="gene ID" value="ENSG00000079263.19"/>
</dbReference>
<dbReference type="Ensembl" id="ENST00000417495.7">
    <molecule id="Q13342-3"/>
    <property type="protein sequence ID" value="ENSP00000393618.3"/>
    <property type="gene ID" value="ENSG00000079263.19"/>
</dbReference>
<dbReference type="Ensembl" id="ENST00000420434.7">
    <molecule id="Q13342-5"/>
    <property type="protein sequence ID" value="ENSP00000398210.3"/>
    <property type="gene ID" value="ENSG00000079263.19"/>
</dbReference>
<dbReference type="GeneID" id="11262"/>
<dbReference type="KEGG" id="hsa:11262"/>
<dbReference type="MANE-Select" id="ENST00000392045.8">
    <property type="protein sequence ID" value="ENSP00000375899.3"/>
    <property type="RefSeq nucleotide sequence ID" value="NM_007237.5"/>
    <property type="RefSeq protein sequence ID" value="NP_009168.4"/>
</dbReference>
<dbReference type="UCSC" id="uc002vqj.4">
    <molecule id="Q13342-1"/>
    <property type="organism name" value="human"/>
</dbReference>
<dbReference type="AGR" id="HGNC:17133"/>
<dbReference type="CTD" id="11262"/>
<dbReference type="DisGeNET" id="11262"/>
<dbReference type="GeneCards" id="SP140"/>
<dbReference type="HGNC" id="HGNC:17133">
    <property type="gene designation" value="SP140"/>
</dbReference>
<dbReference type="HPA" id="ENSG00000079263">
    <property type="expression patterns" value="Group enriched (intestine, lymphoid tissue)"/>
</dbReference>
<dbReference type="MalaCards" id="SP140"/>
<dbReference type="MIM" id="608602">
    <property type="type" value="gene"/>
</dbReference>
<dbReference type="neXtProt" id="NX_Q13342"/>
<dbReference type="OpenTargets" id="ENSG00000079263"/>
<dbReference type="PharmGKB" id="PA38205"/>
<dbReference type="VEuPathDB" id="HostDB:ENSG00000079263"/>
<dbReference type="eggNOG" id="KOG2177">
    <property type="taxonomic scope" value="Eukaryota"/>
</dbReference>
<dbReference type="GeneTree" id="ENSGT00940000162129"/>
<dbReference type="HOGENOM" id="CLU_015844_1_0_1"/>
<dbReference type="InParanoid" id="Q13342"/>
<dbReference type="OMA" id="LGNSDEC"/>
<dbReference type="OrthoDB" id="9536595at2759"/>
<dbReference type="PAN-GO" id="Q13342">
    <property type="GO annotations" value="3 GO annotations based on evolutionary models"/>
</dbReference>
<dbReference type="PhylomeDB" id="Q13342"/>
<dbReference type="TreeFam" id="TF335091"/>
<dbReference type="PathwayCommons" id="Q13342"/>
<dbReference type="SignaLink" id="Q13342"/>
<dbReference type="BioGRID-ORCS" id="11262">
    <property type="hits" value="13 hits in 1179 CRISPR screens"/>
</dbReference>
<dbReference type="CD-CODE" id="462A97B5">
    <property type="entry name" value="Leucocyte nuclear body"/>
</dbReference>
<dbReference type="ChiTaRS" id="SP140">
    <property type="organism name" value="human"/>
</dbReference>
<dbReference type="EvolutionaryTrace" id="Q13342"/>
<dbReference type="GenomeRNAi" id="11262"/>
<dbReference type="Pharos" id="Q13342">
    <property type="development level" value="Tbio"/>
</dbReference>
<dbReference type="PRO" id="PR:Q13342"/>
<dbReference type="Proteomes" id="UP000005640">
    <property type="component" value="Chromosome 2"/>
</dbReference>
<dbReference type="RNAct" id="Q13342">
    <property type="molecule type" value="protein"/>
</dbReference>
<dbReference type="Bgee" id="ENSG00000079263">
    <property type="expression patterns" value="Expressed in lymph node and 103 other cell types or tissues"/>
</dbReference>
<dbReference type="ExpressionAtlas" id="Q13342">
    <property type="expression patterns" value="baseline and differential"/>
</dbReference>
<dbReference type="GO" id="GO:0001650">
    <property type="term" value="C:fibrillar center"/>
    <property type="evidence" value="ECO:0000314"/>
    <property type="project" value="HPA"/>
</dbReference>
<dbReference type="GO" id="GO:0005739">
    <property type="term" value="C:mitochondrion"/>
    <property type="evidence" value="ECO:0000314"/>
    <property type="project" value="HPA"/>
</dbReference>
<dbReference type="GO" id="GO:0005634">
    <property type="term" value="C:nucleus"/>
    <property type="evidence" value="ECO:0000314"/>
    <property type="project" value="UniProtKB"/>
</dbReference>
<dbReference type="GO" id="GO:0016605">
    <property type="term" value="C:PML body"/>
    <property type="evidence" value="ECO:0007669"/>
    <property type="project" value="UniProtKB-SubCell"/>
</dbReference>
<dbReference type="GO" id="GO:0003677">
    <property type="term" value="F:DNA binding"/>
    <property type="evidence" value="ECO:0007669"/>
    <property type="project" value="UniProtKB-KW"/>
</dbReference>
<dbReference type="GO" id="GO:0000981">
    <property type="term" value="F:DNA-binding transcription factor activity, RNA polymerase II-specific"/>
    <property type="evidence" value="ECO:0000318"/>
    <property type="project" value="GO_Central"/>
</dbReference>
<dbReference type="GO" id="GO:0008270">
    <property type="term" value="F:zinc ion binding"/>
    <property type="evidence" value="ECO:0007669"/>
    <property type="project" value="UniProtKB-KW"/>
</dbReference>
<dbReference type="GO" id="GO:0006952">
    <property type="term" value="P:defense response"/>
    <property type="evidence" value="ECO:0000304"/>
    <property type="project" value="ProtInc"/>
</dbReference>
<dbReference type="GO" id="GO:0006357">
    <property type="term" value="P:regulation of transcription by RNA polymerase II"/>
    <property type="evidence" value="ECO:0000318"/>
    <property type="project" value="GO_Central"/>
</dbReference>
<dbReference type="CDD" id="cd05501">
    <property type="entry name" value="Bromo_SP100C_like"/>
    <property type="match status" value="1"/>
</dbReference>
<dbReference type="CDD" id="cd15626">
    <property type="entry name" value="PHD_SP110_140"/>
    <property type="match status" value="1"/>
</dbReference>
<dbReference type="FunFam" id="1.20.920.10:FF:000028">
    <property type="entry name" value="Nuclear autoantigen Sp-100"/>
    <property type="match status" value="1"/>
</dbReference>
<dbReference type="FunFam" id="3.30.40.10:FF:000294">
    <property type="entry name" value="Nuclear autoantigen Sp-100"/>
    <property type="match status" value="1"/>
</dbReference>
<dbReference type="FunFam" id="3.10.390.10:FF:000005">
    <property type="entry name" value="SP140 nuclear body protein"/>
    <property type="match status" value="1"/>
</dbReference>
<dbReference type="Gene3D" id="1.20.920.10">
    <property type="entry name" value="Bromodomain-like"/>
    <property type="match status" value="1"/>
</dbReference>
<dbReference type="Gene3D" id="3.10.390.10">
    <property type="entry name" value="SAND domain-like"/>
    <property type="match status" value="1"/>
</dbReference>
<dbReference type="Gene3D" id="3.30.40.10">
    <property type="entry name" value="Zinc/RING finger domain, C3HC4 (zinc finger)"/>
    <property type="match status" value="1"/>
</dbReference>
<dbReference type="IDEAL" id="IID00667"/>
<dbReference type="InterPro" id="IPR001487">
    <property type="entry name" value="Bromodomain"/>
</dbReference>
<dbReference type="InterPro" id="IPR036427">
    <property type="entry name" value="Bromodomain-like_sf"/>
</dbReference>
<dbReference type="InterPro" id="IPR004865">
    <property type="entry name" value="HSR_dom"/>
</dbReference>
<dbReference type="InterPro" id="IPR010919">
    <property type="entry name" value="SAND-like_dom_sf"/>
</dbReference>
<dbReference type="InterPro" id="IPR000770">
    <property type="entry name" value="SAND_dom"/>
</dbReference>
<dbReference type="InterPro" id="IPR043563">
    <property type="entry name" value="Sp110/Sp140/Sp140L-like"/>
</dbReference>
<dbReference type="InterPro" id="IPR030411">
    <property type="entry name" value="Sp140_Bromo"/>
</dbReference>
<dbReference type="InterPro" id="IPR019786">
    <property type="entry name" value="Zinc_finger_PHD-type_CS"/>
</dbReference>
<dbReference type="InterPro" id="IPR011011">
    <property type="entry name" value="Znf_FYVE_PHD"/>
</dbReference>
<dbReference type="InterPro" id="IPR001965">
    <property type="entry name" value="Znf_PHD"/>
</dbReference>
<dbReference type="InterPro" id="IPR019787">
    <property type="entry name" value="Znf_PHD-finger"/>
</dbReference>
<dbReference type="InterPro" id="IPR013083">
    <property type="entry name" value="Znf_RING/FYVE/PHD"/>
</dbReference>
<dbReference type="PANTHER" id="PTHR46386">
    <property type="entry name" value="NUCLEAR BODY PROTEIN SP140"/>
    <property type="match status" value="1"/>
</dbReference>
<dbReference type="PANTHER" id="PTHR46386:SF8">
    <property type="entry name" value="NUCLEAR BODY PROTEIN SP140"/>
    <property type="match status" value="1"/>
</dbReference>
<dbReference type="Pfam" id="PF00439">
    <property type="entry name" value="Bromodomain"/>
    <property type="match status" value="1"/>
</dbReference>
<dbReference type="Pfam" id="PF03172">
    <property type="entry name" value="HSR"/>
    <property type="match status" value="1"/>
</dbReference>
<dbReference type="Pfam" id="PF00628">
    <property type="entry name" value="PHD"/>
    <property type="match status" value="1"/>
</dbReference>
<dbReference type="Pfam" id="PF01342">
    <property type="entry name" value="SAND"/>
    <property type="match status" value="1"/>
</dbReference>
<dbReference type="SMART" id="SM00297">
    <property type="entry name" value="BROMO"/>
    <property type="match status" value="1"/>
</dbReference>
<dbReference type="SMART" id="SM00249">
    <property type="entry name" value="PHD"/>
    <property type="match status" value="1"/>
</dbReference>
<dbReference type="SMART" id="SM00258">
    <property type="entry name" value="SAND"/>
    <property type="match status" value="1"/>
</dbReference>
<dbReference type="SUPFAM" id="SSF47370">
    <property type="entry name" value="Bromodomain"/>
    <property type="match status" value="1"/>
</dbReference>
<dbReference type="SUPFAM" id="SSF57903">
    <property type="entry name" value="FYVE/PHD zinc finger"/>
    <property type="match status" value="1"/>
</dbReference>
<dbReference type="SUPFAM" id="SSF63763">
    <property type="entry name" value="SAND domain-like"/>
    <property type="match status" value="1"/>
</dbReference>
<dbReference type="PROSITE" id="PS50014">
    <property type="entry name" value="BROMODOMAIN_2"/>
    <property type="match status" value="1"/>
</dbReference>
<dbReference type="PROSITE" id="PS51414">
    <property type="entry name" value="HSR"/>
    <property type="match status" value="1"/>
</dbReference>
<dbReference type="PROSITE" id="PS50864">
    <property type="entry name" value="SAND"/>
    <property type="match status" value="1"/>
</dbReference>
<dbReference type="PROSITE" id="PS01359">
    <property type="entry name" value="ZF_PHD_1"/>
    <property type="match status" value="1"/>
</dbReference>
<dbReference type="PROSITE" id="PS50016">
    <property type="entry name" value="ZF_PHD_2"/>
    <property type="match status" value="1"/>
</dbReference>
<feature type="chain" id="PRO_0000211206" description="Nuclear body protein SP140">
    <location>
        <begin position="1"/>
        <end position="867"/>
    </location>
</feature>
<feature type="domain" description="HSR" evidence="5">
    <location>
        <begin position="22"/>
        <end position="138"/>
    </location>
</feature>
<feature type="domain" description="SAND" evidence="4">
    <location>
        <begin position="580"/>
        <end position="661"/>
    </location>
</feature>
<feature type="domain" description="Bromo" evidence="2">
    <location>
        <begin position="754"/>
        <end position="857"/>
    </location>
</feature>
<feature type="zinc finger region" description="PHD-type" evidence="3">
    <location>
        <begin position="690"/>
        <end position="736"/>
    </location>
</feature>
<feature type="region of interest" description="Disordered" evidence="6">
    <location>
        <begin position="260"/>
        <end position="341"/>
    </location>
</feature>
<feature type="region of interest" description="Disordered" evidence="6">
    <location>
        <begin position="365"/>
        <end position="432"/>
    </location>
</feature>
<feature type="region of interest" description="Disordered" evidence="6">
    <location>
        <begin position="486"/>
        <end position="580"/>
    </location>
</feature>
<feature type="short sequence motif" description="Nuclear localization signal" evidence="1">
    <location>
        <begin position="495"/>
        <end position="514"/>
    </location>
</feature>
<feature type="compositionally biased region" description="Basic and acidic residues" evidence="6">
    <location>
        <begin position="268"/>
        <end position="301"/>
    </location>
</feature>
<feature type="compositionally biased region" description="Acidic residues" evidence="6">
    <location>
        <begin position="323"/>
        <end position="341"/>
    </location>
</feature>
<feature type="compositionally biased region" description="Acidic residues" evidence="6">
    <location>
        <begin position="384"/>
        <end position="397"/>
    </location>
</feature>
<feature type="compositionally biased region" description="Low complexity" evidence="6">
    <location>
        <begin position="404"/>
        <end position="416"/>
    </location>
</feature>
<feature type="compositionally biased region" description="Basic residues" evidence="6">
    <location>
        <begin position="494"/>
        <end position="512"/>
    </location>
</feature>
<feature type="compositionally biased region" description="Basic residues" evidence="6">
    <location>
        <begin position="567"/>
        <end position="577"/>
    </location>
</feature>
<feature type="modified residue" description="Phosphothreonine" evidence="8">
    <location>
        <position position="726"/>
    </location>
</feature>
<feature type="splice variant" id="VSP_043235" description="In isoform 4." evidence="12">
    <original>VCYEHSPLQMNNVNDLEDRPRLLPYGKQENSNACHEM</original>
    <variation>ENLSSSAVLCQLVSPNKDWRSHEESLAHTGTLRRSCM</variation>
    <location>
        <begin position="136"/>
        <end position="172"/>
    </location>
</feature>
<feature type="splice variant" id="VSP_043236" description="In isoform 4." evidence="12">
    <location>
        <begin position="173"/>
        <end position="867"/>
    </location>
</feature>
<feature type="splice variant" id="VSP_055922" description="In isoform Sp140." evidence="14">
    <location>
        <begin position="219"/>
        <end position="221"/>
    </location>
</feature>
<feature type="splice variant" id="VSP_055923" description="In isoform 6." evidence="12">
    <location>
        <begin position="222"/>
        <end position="247"/>
    </location>
</feature>
<feature type="splice variant" id="VSP_000558" description="In isoform Sp140." evidence="14">
    <location>
        <begin position="248"/>
        <end position="297"/>
    </location>
</feature>
<feature type="splice variant" id="VSP_000559" description="In isoform Sp140." evidence="14">
    <location>
        <begin position="326"/>
        <end position="386"/>
    </location>
</feature>
<feature type="splice variant" id="VSP_000560" description="In isoform LYSp100-A and isoform 6." evidence="12 13">
    <location>
        <begin position="353"/>
        <end position="386"/>
    </location>
</feature>
<feature type="splice variant" id="VSP_055924" description="In isoform 5." evidence="12">
    <location>
        <begin position="387"/>
        <end position="413"/>
    </location>
</feature>
<feature type="splice variant" id="VSP_000561" description="In isoform LYSp100-A." evidence="13">
    <original>SSSLARRGSVSSELENHPMNEEGESEELASSLLYDNVPGAEQ</original>
    <variation>QKQGRKVIKRVAQWILWILQTTPLWENPRGKEEKRGGMAGAE</variation>
    <location>
        <begin position="405"/>
        <end position="446"/>
    </location>
</feature>
<feature type="splice variant" id="VSP_000562" description="In isoform LYSp100-A." evidence="13">
    <location>
        <begin position="447"/>
        <end position="867"/>
    </location>
</feature>
<feature type="sequence variant" id="VAR_055555" description="In dbSNP:rs3820975.">
    <original>L</original>
    <variation>F</variation>
    <location>
        <position position="356"/>
    </location>
</feature>
<feature type="sequence variant" id="VAR_055556" description="In dbSNP:rs4972945.">
    <original>M</original>
    <variation>T</variation>
    <location>
        <position position="512"/>
    </location>
</feature>
<feature type="sequence variant" id="VAR_055557" description="In dbSNP:rs4972946." evidence="7 11">
    <original>E</original>
    <variation>K</variation>
    <location>
        <position position="516"/>
    </location>
</feature>
<feature type="sequence variant" id="VAR_055558" description="In dbSNP:rs11887179.">
    <original>R</original>
    <variation>C</variation>
    <location>
        <position position="558"/>
    </location>
</feature>
<feature type="sequence conflict" description="In Ref. 1; AAB18616/AAB18617 and 2; AAC50817." evidence="15" ref="1 2">
    <original>P</original>
    <variation>A</variation>
    <location>
        <position position="186"/>
    </location>
</feature>
<feature type="sequence conflict" description="In Ref. 1; AAB18617." evidence="15" ref="1">
    <original>LSA</original>
    <variation>FST</variation>
    <location>
        <begin position="356"/>
        <end position="358"/>
    </location>
</feature>
<feature type="sequence conflict" description="In Ref. 5; AAI05744." evidence="15" ref="5">
    <original>V</original>
    <variation>D</variation>
    <location>
        <position position="457"/>
    </location>
</feature>
<feature type="sequence conflict" description="In Ref. 1; AAB18617." evidence="15" ref="1">
    <original>D</original>
    <variation>G</variation>
    <location>
        <position position="838"/>
    </location>
</feature>
<feature type="sequence conflict" description="In Ref. 1; AAB18617." evidence="15" ref="1">
    <original>E</original>
    <variation>G</variation>
    <location>
        <position position="862"/>
    </location>
</feature>
<feature type="strand" evidence="19">
    <location>
        <begin position="587"/>
        <end position="594"/>
    </location>
</feature>
<feature type="strand" evidence="19">
    <location>
        <begin position="597"/>
        <end position="602"/>
    </location>
</feature>
<feature type="helix" evidence="19">
    <location>
        <begin position="603"/>
        <end position="606"/>
    </location>
</feature>
<feature type="strand" evidence="19">
    <location>
        <begin position="615"/>
        <end position="617"/>
    </location>
</feature>
<feature type="helix" evidence="19">
    <location>
        <begin position="625"/>
        <end position="631"/>
    </location>
</feature>
<feature type="helix" evidence="19">
    <location>
        <begin position="635"/>
        <end position="637"/>
    </location>
</feature>
<feature type="helix" evidence="19">
    <location>
        <begin position="640"/>
        <end position="643"/>
    </location>
</feature>
<feature type="strand" evidence="19">
    <location>
        <begin position="644"/>
        <end position="646"/>
    </location>
</feature>
<feature type="helix" evidence="19">
    <location>
        <begin position="651"/>
        <end position="656"/>
    </location>
</feature>
<feature type="strand" evidence="19">
    <location>
        <begin position="665"/>
        <end position="668"/>
    </location>
</feature>
<feature type="turn" evidence="18">
    <location>
        <begin position="694"/>
        <end position="696"/>
    </location>
</feature>
<feature type="strand" evidence="18">
    <location>
        <begin position="706"/>
        <end position="709"/>
    </location>
</feature>
<feature type="turn" evidence="18">
    <location>
        <begin position="714"/>
        <end position="716"/>
    </location>
</feature>
<feature type="strand" evidence="18">
    <location>
        <begin position="717"/>
        <end position="719"/>
    </location>
</feature>
<feature type="strand" evidence="17">
    <location>
        <begin position="722"/>
        <end position="724"/>
    </location>
</feature>
<feature type="strand" evidence="18">
    <location>
        <begin position="725"/>
        <end position="727"/>
    </location>
</feature>
<feature type="helix" evidence="18">
    <location>
        <begin position="731"/>
        <end position="735"/>
    </location>
</feature>
<feature type="helix" evidence="18">
    <location>
        <begin position="747"/>
        <end position="752"/>
    </location>
</feature>
<feature type="helix" evidence="18">
    <location>
        <begin position="757"/>
        <end position="772"/>
    </location>
</feature>
<feature type="helix" evidence="18">
    <location>
        <begin position="776"/>
        <end position="780"/>
    </location>
</feature>
<feature type="helix" evidence="18">
    <location>
        <begin position="784"/>
        <end position="787"/>
    </location>
</feature>
<feature type="helix" evidence="18">
    <location>
        <begin position="801"/>
        <end position="809"/>
    </location>
</feature>
<feature type="helix" evidence="18">
    <location>
        <begin position="816"/>
        <end position="831"/>
    </location>
</feature>
<feature type="turn" evidence="18">
    <location>
        <begin position="840"/>
        <end position="843"/>
    </location>
</feature>
<feature type="helix" evidence="18">
    <location>
        <begin position="844"/>
        <end position="857"/>
    </location>
</feature>